<comment type="function">
    <text evidence="1">Catalyzes the oxidation of 3-carboxy-2-hydroxy-4-methylpentanoate (3-isopropylmalate) to 3-carboxy-4-methyl-2-oxopentanoate. The product decarboxylates to 4-methyl-2 oxopentanoate.</text>
</comment>
<comment type="catalytic activity">
    <reaction evidence="1">
        <text>(2R,3S)-3-isopropylmalate + NAD(+) = 4-methyl-2-oxopentanoate + CO2 + NADH</text>
        <dbReference type="Rhea" id="RHEA:32271"/>
        <dbReference type="ChEBI" id="CHEBI:16526"/>
        <dbReference type="ChEBI" id="CHEBI:17865"/>
        <dbReference type="ChEBI" id="CHEBI:35121"/>
        <dbReference type="ChEBI" id="CHEBI:57540"/>
        <dbReference type="ChEBI" id="CHEBI:57945"/>
        <dbReference type="EC" id="1.1.1.85"/>
    </reaction>
</comment>
<comment type="cofactor">
    <cofactor evidence="1">
        <name>Mg(2+)</name>
        <dbReference type="ChEBI" id="CHEBI:18420"/>
    </cofactor>
    <cofactor evidence="1">
        <name>Mn(2+)</name>
        <dbReference type="ChEBI" id="CHEBI:29035"/>
    </cofactor>
    <text evidence="1">Binds 1 Mg(2+) or Mn(2+) ion per subunit.</text>
</comment>
<comment type="pathway">
    <text evidence="1">Amino-acid biosynthesis; L-leucine biosynthesis; L-leucine from 3-methyl-2-oxobutanoate: step 3/4.</text>
</comment>
<comment type="subunit">
    <text evidence="1">Homodimer.</text>
</comment>
<comment type="subcellular location">
    <subcellularLocation>
        <location evidence="1">Cytoplasm</location>
    </subcellularLocation>
</comment>
<comment type="similarity">
    <text evidence="1">Belongs to the isocitrate and isopropylmalate dehydrogenases family. LeuB type 1 subfamily.</text>
</comment>
<dbReference type="EC" id="1.1.1.85" evidence="1"/>
<dbReference type="EMBL" id="CP000011">
    <property type="protein sequence ID" value="AAU45711.1"/>
    <property type="molecule type" value="Genomic_DNA"/>
</dbReference>
<dbReference type="RefSeq" id="WP_004187693.1">
    <property type="nucleotide sequence ID" value="NC_006349.2"/>
</dbReference>
<dbReference type="RefSeq" id="YP_106289.1">
    <property type="nucleotide sequence ID" value="NC_006349.2"/>
</dbReference>
<dbReference type="SMR" id="Q62AI9"/>
<dbReference type="GeneID" id="93063903"/>
<dbReference type="KEGG" id="bma:BMAA1726"/>
<dbReference type="PATRIC" id="fig|243160.12.peg.5324"/>
<dbReference type="eggNOG" id="COG0473">
    <property type="taxonomic scope" value="Bacteria"/>
</dbReference>
<dbReference type="HOGENOM" id="CLU_031953_0_3_4"/>
<dbReference type="UniPathway" id="UPA00048">
    <property type="reaction ID" value="UER00072"/>
</dbReference>
<dbReference type="Proteomes" id="UP000006693">
    <property type="component" value="Chromosome 2"/>
</dbReference>
<dbReference type="GO" id="GO:0005829">
    <property type="term" value="C:cytosol"/>
    <property type="evidence" value="ECO:0007669"/>
    <property type="project" value="TreeGrafter"/>
</dbReference>
<dbReference type="GO" id="GO:0003862">
    <property type="term" value="F:3-isopropylmalate dehydrogenase activity"/>
    <property type="evidence" value="ECO:0007669"/>
    <property type="project" value="UniProtKB-UniRule"/>
</dbReference>
<dbReference type="GO" id="GO:0000287">
    <property type="term" value="F:magnesium ion binding"/>
    <property type="evidence" value="ECO:0007669"/>
    <property type="project" value="InterPro"/>
</dbReference>
<dbReference type="GO" id="GO:0051287">
    <property type="term" value="F:NAD binding"/>
    <property type="evidence" value="ECO:0007669"/>
    <property type="project" value="InterPro"/>
</dbReference>
<dbReference type="GO" id="GO:0009098">
    <property type="term" value="P:L-leucine biosynthetic process"/>
    <property type="evidence" value="ECO:0007669"/>
    <property type="project" value="UniProtKB-UniRule"/>
</dbReference>
<dbReference type="FunFam" id="3.40.718.10:FF:000028">
    <property type="entry name" value="3-isopropylmalate dehydrogenase"/>
    <property type="match status" value="1"/>
</dbReference>
<dbReference type="Gene3D" id="3.40.718.10">
    <property type="entry name" value="Isopropylmalate Dehydrogenase"/>
    <property type="match status" value="1"/>
</dbReference>
<dbReference type="HAMAP" id="MF_01033">
    <property type="entry name" value="LeuB_type1"/>
    <property type="match status" value="1"/>
</dbReference>
<dbReference type="InterPro" id="IPR019818">
    <property type="entry name" value="IsoCit/isopropylmalate_DH_CS"/>
</dbReference>
<dbReference type="InterPro" id="IPR024084">
    <property type="entry name" value="IsoPropMal-DH-like_dom"/>
</dbReference>
<dbReference type="InterPro" id="IPR004429">
    <property type="entry name" value="Isopropylmalate_DH"/>
</dbReference>
<dbReference type="NCBIfam" id="TIGR00169">
    <property type="entry name" value="leuB"/>
    <property type="match status" value="1"/>
</dbReference>
<dbReference type="PANTHER" id="PTHR42979">
    <property type="entry name" value="3-ISOPROPYLMALATE DEHYDROGENASE"/>
    <property type="match status" value="1"/>
</dbReference>
<dbReference type="PANTHER" id="PTHR42979:SF1">
    <property type="entry name" value="3-ISOPROPYLMALATE DEHYDROGENASE"/>
    <property type="match status" value="1"/>
</dbReference>
<dbReference type="Pfam" id="PF00180">
    <property type="entry name" value="Iso_dh"/>
    <property type="match status" value="1"/>
</dbReference>
<dbReference type="SMART" id="SM01329">
    <property type="entry name" value="Iso_dh"/>
    <property type="match status" value="1"/>
</dbReference>
<dbReference type="SUPFAM" id="SSF53659">
    <property type="entry name" value="Isocitrate/Isopropylmalate dehydrogenase-like"/>
    <property type="match status" value="1"/>
</dbReference>
<dbReference type="PROSITE" id="PS00470">
    <property type="entry name" value="IDH_IMDH"/>
    <property type="match status" value="1"/>
</dbReference>
<proteinExistence type="inferred from homology"/>
<keyword id="KW-0028">Amino-acid biosynthesis</keyword>
<keyword id="KW-0100">Branched-chain amino acid biosynthesis</keyword>
<keyword id="KW-0963">Cytoplasm</keyword>
<keyword id="KW-0432">Leucine biosynthesis</keyword>
<keyword id="KW-0460">Magnesium</keyword>
<keyword id="KW-0464">Manganese</keyword>
<keyword id="KW-0479">Metal-binding</keyword>
<keyword id="KW-0520">NAD</keyword>
<keyword id="KW-0560">Oxidoreductase</keyword>
<keyword id="KW-1185">Reference proteome</keyword>
<name>LEU3_BURMA</name>
<accession>Q62AI9</accession>
<evidence type="ECO:0000255" key="1">
    <source>
        <dbReference type="HAMAP-Rule" id="MF_01033"/>
    </source>
</evidence>
<reference key="1">
    <citation type="journal article" date="2004" name="Proc. Natl. Acad. Sci. U.S.A.">
        <title>Structural flexibility in the Burkholderia mallei genome.</title>
        <authorList>
            <person name="Nierman W.C."/>
            <person name="DeShazer D."/>
            <person name="Kim H.S."/>
            <person name="Tettelin H."/>
            <person name="Nelson K.E."/>
            <person name="Feldblyum T.V."/>
            <person name="Ulrich R.L."/>
            <person name="Ronning C.M."/>
            <person name="Brinkac L.M."/>
            <person name="Daugherty S.C."/>
            <person name="Davidsen T.D."/>
            <person name="DeBoy R.T."/>
            <person name="Dimitrov G."/>
            <person name="Dodson R.J."/>
            <person name="Durkin A.S."/>
            <person name="Gwinn M.L."/>
            <person name="Haft D.H."/>
            <person name="Khouri H.M."/>
            <person name="Kolonay J.F."/>
            <person name="Madupu R."/>
            <person name="Mohammoud Y."/>
            <person name="Nelson W.C."/>
            <person name="Radune D."/>
            <person name="Romero C.M."/>
            <person name="Sarria S."/>
            <person name="Selengut J."/>
            <person name="Shamblin C."/>
            <person name="Sullivan S.A."/>
            <person name="White O."/>
            <person name="Yu Y."/>
            <person name="Zafar N."/>
            <person name="Zhou L."/>
            <person name="Fraser C.M."/>
        </authorList>
    </citation>
    <scope>NUCLEOTIDE SEQUENCE [LARGE SCALE GENOMIC DNA]</scope>
    <source>
        <strain>ATCC 23344</strain>
    </source>
</reference>
<gene>
    <name evidence="1" type="primary">leuB</name>
    <name type="ordered locus">BMAA1726</name>
</gene>
<protein>
    <recommendedName>
        <fullName evidence="1">3-isopropylmalate dehydrogenase</fullName>
        <ecNumber evidence="1">1.1.1.85</ecNumber>
    </recommendedName>
    <alternativeName>
        <fullName evidence="1">3-IPM-DH</fullName>
    </alternativeName>
    <alternativeName>
        <fullName evidence="1">Beta-IPM dehydrogenase</fullName>
        <shortName evidence="1">IMDH</shortName>
    </alternativeName>
</protein>
<organism>
    <name type="scientific">Burkholderia mallei (strain ATCC 23344)</name>
    <dbReference type="NCBI Taxonomy" id="243160"/>
    <lineage>
        <taxon>Bacteria</taxon>
        <taxon>Pseudomonadati</taxon>
        <taxon>Pseudomonadota</taxon>
        <taxon>Betaproteobacteria</taxon>
        <taxon>Burkholderiales</taxon>
        <taxon>Burkholderiaceae</taxon>
        <taxon>Burkholderia</taxon>
        <taxon>pseudomallei group</taxon>
    </lineage>
</organism>
<feature type="chain" id="PRO_0000083672" description="3-isopropylmalate dehydrogenase">
    <location>
        <begin position="1"/>
        <end position="355"/>
    </location>
</feature>
<feature type="binding site" evidence="1">
    <location>
        <position position="90"/>
    </location>
    <ligand>
        <name>substrate</name>
    </ligand>
</feature>
<feature type="binding site" evidence="1">
    <location>
        <position position="100"/>
    </location>
    <ligand>
        <name>substrate</name>
    </ligand>
</feature>
<feature type="binding site" evidence="1">
    <location>
        <position position="128"/>
    </location>
    <ligand>
        <name>substrate</name>
    </ligand>
</feature>
<feature type="binding site" evidence="1">
    <location>
        <position position="222"/>
    </location>
    <ligand>
        <name>Mg(2+)</name>
        <dbReference type="ChEBI" id="CHEBI:18420"/>
    </ligand>
</feature>
<feature type="binding site" evidence="1">
    <location>
        <position position="222"/>
    </location>
    <ligand>
        <name>substrate</name>
    </ligand>
</feature>
<feature type="binding site" evidence="1">
    <location>
        <position position="246"/>
    </location>
    <ligand>
        <name>Mg(2+)</name>
        <dbReference type="ChEBI" id="CHEBI:18420"/>
    </ligand>
</feature>
<feature type="binding site" evidence="1">
    <location>
        <position position="250"/>
    </location>
    <ligand>
        <name>Mg(2+)</name>
        <dbReference type="ChEBI" id="CHEBI:18420"/>
    </ligand>
</feature>
<feature type="binding site" evidence="1">
    <location>
        <begin position="280"/>
        <end position="292"/>
    </location>
    <ligand>
        <name>NAD(+)</name>
        <dbReference type="ChEBI" id="CHEBI:57540"/>
    </ligand>
</feature>
<feature type="site" description="Important for catalysis" evidence="1">
    <location>
        <position position="135"/>
    </location>
</feature>
<feature type="site" description="Important for catalysis" evidence="1">
    <location>
        <position position="190"/>
    </location>
</feature>
<sequence length="355" mass="38187">MKIAVLPGDGIGPEIVNEAVKVLNALDEKFELEQAPVGGAGYEASGHPLPDATLALAKEADAILFGAVGDWKYDSLERALRPEQAILGLRKHLELFANFRPAICYPQLVDASPLKPELVAGLDILIVRELNGDIYFGQPRGVRAAPDGPFAGAREGFDTMRYSEPEVRRIAHVAFQAARKRAKKLLSVDKSNVLETSQFWRDVMIDVSKEYADVELSHMYVDNAAMQLAKAPKQFDVIVTGNMFGDILSDEASMLTGSIGMLPSASLDQRNKGLYEPSHGSAPDIAGKGIANPLATILSAAMLLRYSLNRAEQADRIERAVKAVLEQGYRTGDIATPGCKQVGTAAMGDAVVAAL</sequence>